<sequence>MESPTHPKPSKDKTFPWNLVFLVGILFQIDMGMANPSPHQVYNVTWVITNVQTNSRANATSMLGTLTDAYPTLYVDLCDLVGDTWEPIAPDPRSWARYSSSTHGCKTTDRKKQQQTYPFYVCPGHAPSMGPKGTYCGGAQDGFCAAWGCETTGEAWWKPTSSWDYITVKRGSNQDNSCKGKCNPLVLQFTQKGRQASWDRPKMWGLRLYRSGYDPIALFSVSRQVMTITPPQAMGPNLVLPDQKPPSRQSQTKSKVTTQRPQITSSTPRSVASATMGPKRIGTGDRLINLVQGTYLALNATDPNKTKDCWLCLVSRPPYYEGIAVLGNYSNQTNPPPSCLSTPQHKLTISEVSGQGLCIGTVPKTHQALCKKTQKGHKGTHYLAAPNGTYWACNTGLTPCISMAVLNWTSDFCVLIELWPRVTYHQPEYIYTHFDKAVRFRREPISLTVALMLGGLTVGGIAAGVGTGTKALLETAQFRQLQIAMHTDIQALEESISALEKSLTSLSEVVLQNRRGLDILFLQEGGLCAALKEECCFYADHTGLVRDNMAKLRERLKQRQQLFDSQQGWFEGWFNKSPWFTTLISSIMGPLLILLLILLLGPCILNRLVQFVKDRISVVQALILTQQYQQIQQYDSDRP</sequence>
<protein>
    <recommendedName>
        <fullName>Envelope glycoprotein</fullName>
    </recommendedName>
    <alternativeName>
        <fullName>Env polyprotein</fullName>
    </alternativeName>
    <component>
        <recommendedName>
            <fullName>Surface protein</fullName>
            <shortName>SU</shortName>
        </recommendedName>
        <alternativeName>
            <fullName>Glycoprotein 70</fullName>
            <shortName>gp70</shortName>
        </alternativeName>
    </component>
    <component>
        <recommendedName>
            <fullName>Transmembrane protein</fullName>
            <shortName>TM</shortName>
        </recommendedName>
        <alternativeName>
            <fullName>Envelope protein p15E</fullName>
        </alternativeName>
    </component>
    <component>
        <recommendedName>
            <fullName>R-peptide</fullName>
        </recommendedName>
        <alternativeName>
            <fullName>p2E</fullName>
        </alternativeName>
    </component>
</protein>
<organism>
    <name type="scientific">Feline leukemia virus (strain C/Sarma)</name>
    <dbReference type="NCBI Taxonomy" id="103919"/>
    <lineage>
        <taxon>Viruses</taxon>
        <taxon>Riboviria</taxon>
        <taxon>Pararnavirae</taxon>
        <taxon>Artverviricota</taxon>
        <taxon>Revtraviricetes</taxon>
        <taxon>Ortervirales</taxon>
        <taxon>Retroviridae</taxon>
        <taxon>Orthoretrovirinae</taxon>
        <taxon>Gammaretrovirus</taxon>
        <taxon>Feline leukemia virus</taxon>
    </lineage>
</organism>
<proteinExistence type="inferred from homology"/>
<dbReference type="EMBL" id="M14331">
    <property type="protein sequence ID" value="AAA43049.1"/>
    <property type="molecule type" value="Genomic_DNA"/>
</dbReference>
<dbReference type="PIR" id="A29013">
    <property type="entry name" value="VCMVSA"/>
</dbReference>
<dbReference type="PIR" id="A46165">
    <property type="entry name" value="A46165"/>
</dbReference>
<dbReference type="SMR" id="P06752"/>
<dbReference type="GlyCosmos" id="P06752">
    <property type="glycosylation" value="8 sites, No reported glycans"/>
</dbReference>
<dbReference type="GO" id="GO:0020002">
    <property type="term" value="C:host cell plasma membrane"/>
    <property type="evidence" value="ECO:0007669"/>
    <property type="project" value="UniProtKB-SubCell"/>
</dbReference>
<dbReference type="GO" id="GO:0016020">
    <property type="term" value="C:membrane"/>
    <property type="evidence" value="ECO:0007669"/>
    <property type="project" value="UniProtKB-KW"/>
</dbReference>
<dbReference type="GO" id="GO:0019031">
    <property type="term" value="C:viral envelope"/>
    <property type="evidence" value="ECO:0007669"/>
    <property type="project" value="UniProtKB-KW"/>
</dbReference>
<dbReference type="GO" id="GO:0055036">
    <property type="term" value="C:virion membrane"/>
    <property type="evidence" value="ECO:0007669"/>
    <property type="project" value="UniProtKB-SubCell"/>
</dbReference>
<dbReference type="GO" id="GO:0019064">
    <property type="term" value="P:fusion of virus membrane with host plasma membrane"/>
    <property type="evidence" value="ECO:0007669"/>
    <property type="project" value="UniProtKB-KW"/>
</dbReference>
<dbReference type="GO" id="GO:0046718">
    <property type="term" value="P:symbiont entry into host cell"/>
    <property type="evidence" value="ECO:0007669"/>
    <property type="project" value="UniProtKB-KW"/>
</dbReference>
<dbReference type="GO" id="GO:0019062">
    <property type="term" value="P:virion attachment to host cell"/>
    <property type="evidence" value="ECO:0007669"/>
    <property type="project" value="UniProtKB-KW"/>
</dbReference>
<dbReference type="CDD" id="cd09851">
    <property type="entry name" value="HTLV-1-like_HR1-HR2"/>
    <property type="match status" value="1"/>
</dbReference>
<dbReference type="Gene3D" id="1.10.287.210">
    <property type="match status" value="1"/>
</dbReference>
<dbReference type="Gene3D" id="3.90.310.10">
    <property type="entry name" value="ENV polyprotein, receptor-binding domain"/>
    <property type="match status" value="1"/>
</dbReference>
<dbReference type="InterPro" id="IPR008981">
    <property type="entry name" value="FMuLV_rcpt-bd"/>
</dbReference>
<dbReference type="InterPro" id="IPR018154">
    <property type="entry name" value="TLV/ENV_coat_polyprotein"/>
</dbReference>
<dbReference type="PANTHER" id="PTHR10424:SF72">
    <property type="entry name" value="BC035947 PROTEIN-RELATED"/>
    <property type="match status" value="1"/>
</dbReference>
<dbReference type="PANTHER" id="PTHR10424">
    <property type="entry name" value="VIRAL ENVELOPE PROTEIN"/>
    <property type="match status" value="1"/>
</dbReference>
<dbReference type="Pfam" id="PF00429">
    <property type="entry name" value="TLV_coat"/>
    <property type="match status" value="1"/>
</dbReference>
<dbReference type="SUPFAM" id="SSF49830">
    <property type="entry name" value="ENV polyprotein, receptor-binding domain"/>
    <property type="match status" value="1"/>
</dbReference>
<dbReference type="SUPFAM" id="SSF58069">
    <property type="entry name" value="Virus ectodomain"/>
    <property type="match status" value="1"/>
</dbReference>
<keyword id="KW-0165">Cleavage on pair of basic residues</keyword>
<keyword id="KW-0175">Coiled coil</keyword>
<keyword id="KW-1015">Disulfide bond</keyword>
<keyword id="KW-1169">Fusion of virus membrane with host cell membrane</keyword>
<keyword id="KW-1168">Fusion of virus membrane with host membrane</keyword>
<keyword id="KW-0325">Glycoprotein</keyword>
<keyword id="KW-1032">Host cell membrane</keyword>
<keyword id="KW-1043">Host membrane</keyword>
<keyword id="KW-0945">Host-virus interaction</keyword>
<keyword id="KW-0449">Lipoprotein</keyword>
<keyword id="KW-0472">Membrane</keyword>
<keyword id="KW-0564">Palmitate</keyword>
<keyword id="KW-0732">Signal</keyword>
<keyword id="KW-0812">Transmembrane</keyword>
<keyword id="KW-1133">Transmembrane helix</keyword>
<keyword id="KW-1161">Viral attachment to host cell</keyword>
<keyword id="KW-0261">Viral envelope protein</keyword>
<keyword id="KW-1162">Viral penetration into host cytoplasm</keyword>
<keyword id="KW-0946">Virion</keyword>
<keyword id="KW-1160">Virus entry into host cell</keyword>
<feature type="signal peptide" evidence="2">
    <location>
        <begin position="1"/>
        <end position="34"/>
    </location>
</feature>
<feature type="chain" id="PRO_0000239568" description="Envelope glycoprotein">
    <location>
        <begin position="35"/>
        <end position="639"/>
    </location>
</feature>
<feature type="chain" id="PRO_0000040716" description="Surface protein" evidence="1">
    <location>
        <begin position="35"/>
        <end position="442"/>
    </location>
</feature>
<feature type="chain" id="PRO_0000040717" description="Transmembrane protein" evidence="1">
    <location>
        <begin position="443"/>
        <end position="622"/>
    </location>
</feature>
<feature type="peptide" id="PRO_0000239569" description="R-peptide" evidence="1">
    <location>
        <begin position="623"/>
        <end position="639"/>
    </location>
</feature>
<feature type="topological domain" description="Extracellular" evidence="2">
    <location>
        <begin position="35"/>
        <end position="583"/>
    </location>
</feature>
<feature type="transmembrane region" description="Helical" evidence="2">
    <location>
        <begin position="584"/>
        <end position="604"/>
    </location>
</feature>
<feature type="topological domain" description="Cytoplasmic" evidence="2">
    <location>
        <begin position="605"/>
        <end position="639"/>
    </location>
</feature>
<feature type="region of interest" description="Disordered" evidence="3">
    <location>
        <begin position="232"/>
        <end position="278"/>
    </location>
</feature>
<feature type="region of interest" description="Fusion peptide" evidence="2">
    <location>
        <begin position="445"/>
        <end position="465"/>
    </location>
</feature>
<feature type="region of interest" description="Immunosuppression" evidence="1">
    <location>
        <begin position="511"/>
        <end position="527"/>
    </location>
</feature>
<feature type="coiled-coil region" evidence="2">
    <location>
        <begin position="473"/>
        <end position="522"/>
    </location>
</feature>
<feature type="coiled-coil region" evidence="2">
    <location>
        <begin position="532"/>
        <end position="568"/>
    </location>
</feature>
<feature type="short sequence motif" description="CXXC">
    <location>
        <begin position="309"/>
        <end position="312"/>
    </location>
</feature>
<feature type="short sequence motif" description="CX6CC">
    <location>
        <begin position="528"/>
        <end position="536"/>
    </location>
</feature>
<feature type="compositionally biased region" description="Polar residues" evidence="3">
    <location>
        <begin position="246"/>
        <end position="273"/>
    </location>
</feature>
<feature type="site" description="Cleavage; by host" evidence="1">
    <location>
        <begin position="442"/>
        <end position="443"/>
    </location>
</feature>
<feature type="site" description="Cleavage; by viral protease" evidence="1">
    <location>
        <begin position="622"/>
        <end position="623"/>
    </location>
</feature>
<feature type="lipid moiety-binding region" description="S-palmitoyl cysteine; by host" evidence="1">
    <location>
        <position position="603"/>
    </location>
</feature>
<feature type="glycosylation site" description="N-linked (GlcNAc...) asparagine; by host" evidence="2">
    <location>
        <position position="43"/>
    </location>
</feature>
<feature type="glycosylation site" description="N-linked (GlcNAc...) asparagine; by host" evidence="2">
    <location>
        <position position="58"/>
    </location>
</feature>
<feature type="glycosylation site" description="N-linked (GlcNAc...) asparagine; by host" evidence="2">
    <location>
        <position position="299"/>
    </location>
</feature>
<feature type="glycosylation site" description="N-linked (GlcNAc...) asparagine; by host" evidence="2">
    <location>
        <position position="304"/>
    </location>
</feature>
<feature type="glycosylation site" description="N-linked (GlcNAc...) asparagine; by host" evidence="2">
    <location>
        <position position="328"/>
    </location>
</feature>
<feature type="glycosylation site" description="N-linked (GlcNAc...) asparagine; by host" evidence="2">
    <location>
        <position position="331"/>
    </location>
</feature>
<feature type="glycosylation site" description="N-linked (GlcNAc...) asparagine; by host" evidence="2">
    <location>
        <position position="387"/>
    </location>
</feature>
<feature type="glycosylation site" description="N-linked (GlcNAc...) asparagine; by host" evidence="2">
    <location>
        <position position="407"/>
    </location>
</feature>
<feature type="disulfide bond" evidence="1">
    <location>
        <begin position="122"/>
        <end position="144"/>
    </location>
</feature>
<feature type="disulfide bond" evidence="1">
    <location>
        <begin position="136"/>
        <end position="149"/>
    </location>
</feature>
<feature type="disulfide bond" description="Interchain (between SU and TM chains, or C-312 with C-536); in linked form" evidence="1">
    <location>
        <begin position="309"/>
        <end position="536"/>
    </location>
</feature>
<feature type="disulfide bond" evidence="1">
    <location>
        <begin position="309"/>
        <end position="312"/>
    </location>
</feature>
<feature type="disulfide bond" evidence="1">
    <location>
        <begin position="528"/>
        <end position="535"/>
    </location>
</feature>
<reference key="1">
    <citation type="journal article" date="1986" name="J. Virol.">
        <title>Molecular analysis and pathogenesis of the feline aplastic anemia retrovirus, feline leukemia virus C-Sarma.</title>
        <authorList>
            <person name="Riedel N."/>
            <person name="Hoover E.A."/>
            <person name="Gasper P.W."/>
            <person name="Nicolson M.O."/>
            <person name="Mullins J.I."/>
        </authorList>
    </citation>
    <scope>NUCLEOTIDE SEQUENCE [GENOMIC DNA]</scope>
</reference>
<gene>
    <name type="primary">env</name>
</gene>
<organismHost>
    <name type="scientific">Felis catus</name>
    <name type="common">Cat</name>
    <name type="synonym">Felis silvestris catus</name>
    <dbReference type="NCBI Taxonomy" id="9685"/>
</organismHost>
<accession>P06752</accession>
<comment type="function">
    <text evidence="1">The surface protein (SU) attaches the virus to the host cell by binding to its receptor. This interaction triggers the refolding of the transmembrane protein (TM) and is thought to activate its fusogenic potential by unmasking its fusion peptide. Fusion occurs at the host cell plasma membrane (By similarity).</text>
</comment>
<comment type="function">
    <text evidence="1">The transmembrane protein (TM) acts as a class I viral fusion protein. Under the current model, the protein has at least 3 conformational states: pre-fusion native state, pre-hairpin intermediate state, and post-fusion hairpin state. During viral and target cell membrane fusion, the coiled coil regions (heptad repeats) assume a trimer-of-hairpins structure, positioning the fusion peptide in close proximity to the C-terminal region of the ectodomain. The formation of this structure appears to drive apposition and subsequent fusion of viral and target cell membranes. Membranes fusion leads to delivery of the nucleocapsid into the cytoplasm (By similarity).</text>
</comment>
<comment type="subunit">
    <text evidence="1">The mature envelope protein (Env) consists of a trimer of SU-TM heterodimers attached by a labile interchain disulfide bond.</text>
</comment>
<comment type="subcellular location">
    <molecule>Transmembrane protein</molecule>
    <subcellularLocation>
        <location evidence="1">Virion membrane</location>
        <topology evidence="1">Single-pass type I membrane protein</topology>
    </subcellularLocation>
    <subcellularLocation>
        <location evidence="1">Host cell membrane</location>
        <topology evidence="1">Single-pass type I membrane protein</topology>
    </subcellularLocation>
</comment>
<comment type="subcellular location">
    <molecule>Surface protein</molecule>
    <subcellularLocation>
        <location>Virion membrane</location>
        <topology>Peripheral membrane protein</topology>
    </subcellularLocation>
    <subcellularLocation>
        <location evidence="1">Host cell membrane</location>
        <topology evidence="1">Peripheral membrane protein</topology>
    </subcellularLocation>
    <text evidence="1">The surface protein is not anchored to the viral envelope, but associates with the extravirion surface through its binding to TM. Both proteins are thought to be concentrated at the site of budding and incorporated into the virions possibly by contacts between the cytoplasmic tail of Env and the N-terminus of Gag (By similarity).</text>
</comment>
<comment type="subcellular location">
    <molecule>R-peptide</molecule>
    <subcellularLocation>
        <location evidence="1">Host cell membrane</location>
        <topology evidence="1">Peripheral membrane protein</topology>
    </subcellularLocation>
    <text evidence="1">The R-peptide is membrane-associated through its palmitate.</text>
</comment>
<comment type="domain">
    <text evidence="1">The 17 amino acids long immunosuppressive region is present in many retroviral envelope proteins. Synthetic peptides derived from this relatively conserved sequence inhibit immune function in vitro and in vivo (By similarity).</text>
</comment>
<comment type="PTM">
    <text evidence="1">Specific enzymatic cleavages in vivo yield mature proteins. Envelope glycoproteins are synthesized as an inactive precursor that is N-glycosylated and processed likely by host cell furin or by a furin-like protease in the Golgi to yield the mature SU and TM proteins. The cleavage site between SU and TM requires the minimal sequence [KR]-X-[KR]-R. The R-peptide is released from the C-terminus of the cytoplasmic tail of the TM protein upon particle formation as a result of proteolytic cleavage by the viral protease. Cleavage of this peptide is required for TM to become fusogenic (By similarity).</text>
</comment>
<comment type="PTM">
    <text evidence="1">The CXXC motif is highly conserved across a broad range of retroviral envelope proteins. It is thought to participate in the formation of a labile disulfide bond possibly with the CX6CC motif present in the transmembrane protein. Isomerization of the intersubunit disulfide bond to an SU intrachain disulfide bond is thought to occur upon receptor recognition in order to allow membrane fusion (By similarity).</text>
</comment>
<comment type="PTM">
    <text evidence="1">The transmembrane protein is palmitoylated.</text>
</comment>
<comment type="PTM">
    <text evidence="1">The R-peptide is palmitoylated.</text>
</comment>
<name>ENV_FLVSA</name>
<evidence type="ECO:0000250" key="1"/>
<evidence type="ECO:0000255" key="2"/>
<evidence type="ECO:0000256" key="3">
    <source>
        <dbReference type="SAM" id="MobiDB-lite"/>
    </source>
</evidence>